<gene>
    <name evidence="1" type="primary">rnz</name>
    <name type="ordered locus">OEOE_1071</name>
</gene>
<feature type="chain" id="PRO_1000070310" description="Ribonuclease Z">
    <location>
        <begin position="1"/>
        <end position="325"/>
    </location>
</feature>
<feature type="active site" description="Proton acceptor" evidence="1">
    <location>
        <position position="67"/>
    </location>
</feature>
<feature type="binding site" evidence="1">
    <location>
        <position position="63"/>
    </location>
    <ligand>
        <name>Zn(2+)</name>
        <dbReference type="ChEBI" id="CHEBI:29105"/>
        <label>1</label>
        <note>catalytic</note>
    </ligand>
</feature>
<feature type="binding site" evidence="1">
    <location>
        <position position="65"/>
    </location>
    <ligand>
        <name>Zn(2+)</name>
        <dbReference type="ChEBI" id="CHEBI:29105"/>
        <label>1</label>
        <note>catalytic</note>
    </ligand>
</feature>
<feature type="binding site" evidence="1">
    <location>
        <position position="67"/>
    </location>
    <ligand>
        <name>Zn(2+)</name>
        <dbReference type="ChEBI" id="CHEBI:29105"/>
        <label>2</label>
        <note>catalytic</note>
    </ligand>
</feature>
<feature type="binding site" evidence="1">
    <location>
        <position position="68"/>
    </location>
    <ligand>
        <name>Zn(2+)</name>
        <dbReference type="ChEBI" id="CHEBI:29105"/>
        <label>2</label>
        <note>catalytic</note>
    </ligand>
</feature>
<feature type="binding site" evidence="1">
    <location>
        <position position="147"/>
    </location>
    <ligand>
        <name>Zn(2+)</name>
        <dbReference type="ChEBI" id="CHEBI:29105"/>
        <label>1</label>
        <note>catalytic</note>
    </ligand>
</feature>
<feature type="binding site" evidence="1">
    <location>
        <position position="218"/>
    </location>
    <ligand>
        <name>Zn(2+)</name>
        <dbReference type="ChEBI" id="CHEBI:29105"/>
        <label>1</label>
        <note>catalytic</note>
    </ligand>
</feature>
<feature type="binding site" evidence="1">
    <location>
        <position position="218"/>
    </location>
    <ligand>
        <name>Zn(2+)</name>
        <dbReference type="ChEBI" id="CHEBI:29105"/>
        <label>2</label>
        <note>catalytic</note>
    </ligand>
</feature>
<feature type="binding site" evidence="1">
    <location>
        <position position="276"/>
    </location>
    <ligand>
        <name>Zn(2+)</name>
        <dbReference type="ChEBI" id="CHEBI:29105"/>
        <label>2</label>
        <note>catalytic</note>
    </ligand>
</feature>
<comment type="function">
    <text evidence="1">Zinc phosphodiesterase, which displays some tRNA 3'-processing endonuclease activity. Probably involved in tRNA maturation, by removing a 3'-trailer from precursor tRNA.</text>
</comment>
<comment type="catalytic activity">
    <reaction evidence="1">
        <text>Endonucleolytic cleavage of RNA, removing extra 3' nucleotides from tRNA precursor, generating 3' termini of tRNAs. A 3'-hydroxy group is left at the tRNA terminus and a 5'-phosphoryl group is left at the trailer molecule.</text>
        <dbReference type="EC" id="3.1.26.11"/>
    </reaction>
</comment>
<comment type="cofactor">
    <cofactor evidence="1">
        <name>Zn(2+)</name>
        <dbReference type="ChEBI" id="CHEBI:29105"/>
    </cofactor>
    <text evidence="1">Binds 2 Zn(2+) ions.</text>
</comment>
<comment type="subunit">
    <text evidence="1">Homodimer.</text>
</comment>
<comment type="similarity">
    <text evidence="1">Belongs to the RNase Z family.</text>
</comment>
<proteinExistence type="inferred from homology"/>
<name>RNZ_OENOB</name>
<evidence type="ECO:0000255" key="1">
    <source>
        <dbReference type="HAMAP-Rule" id="MF_01818"/>
    </source>
</evidence>
<accession>Q04EZ9</accession>
<sequence>MELEFLGTGAGQPSKQRNVTSIALRLLDERNEVWLFDVGEATQHQLLKSNTRSRKVTKIFITHMHGDHIFGLPGFLTSRNFQGSELIDGGKPTDVTIYGPAGLQQYVFSVLRAAQVRLQYRINFIQVRPGIIFEDQQFAVSAFPMNHGIEDYAYRVVEKDTVGQLQVEKLLKLGLKSGPLFGKIKAGEIVKLENGLTINGKDFLGPDRPGRIIAIVLDTKDTPEIIKAAEQADVLVHEATYGAENSIMAKRHGHSTSLQAAEHARAAHAHQLILTHISARYLGKMADQLVKQAKNVFRPTYIAHDLEIFDIPAKKSERKDKIDVG</sequence>
<dbReference type="EC" id="3.1.26.11" evidence="1"/>
<dbReference type="EMBL" id="CP000411">
    <property type="protein sequence ID" value="ABJ56973.1"/>
    <property type="molecule type" value="Genomic_DNA"/>
</dbReference>
<dbReference type="RefSeq" id="WP_002823220.1">
    <property type="nucleotide sequence ID" value="NC_008528.1"/>
</dbReference>
<dbReference type="SMR" id="Q04EZ9"/>
<dbReference type="STRING" id="203123.OEOE_1071"/>
<dbReference type="KEGG" id="ooe:OEOE_1071"/>
<dbReference type="PATRIC" id="fig|203123.7.peg.1090"/>
<dbReference type="eggNOG" id="COG1234">
    <property type="taxonomic scope" value="Bacteria"/>
</dbReference>
<dbReference type="HOGENOM" id="CLU_031317_2_0_9"/>
<dbReference type="Proteomes" id="UP000000774">
    <property type="component" value="Chromosome"/>
</dbReference>
<dbReference type="GO" id="GO:0042781">
    <property type="term" value="F:3'-tRNA processing endoribonuclease activity"/>
    <property type="evidence" value="ECO:0007669"/>
    <property type="project" value="UniProtKB-UniRule"/>
</dbReference>
<dbReference type="GO" id="GO:0008270">
    <property type="term" value="F:zinc ion binding"/>
    <property type="evidence" value="ECO:0007669"/>
    <property type="project" value="UniProtKB-UniRule"/>
</dbReference>
<dbReference type="CDD" id="cd07717">
    <property type="entry name" value="RNaseZ_ZiPD-like_MBL-fold"/>
    <property type="match status" value="1"/>
</dbReference>
<dbReference type="FunFam" id="3.60.15.10:FF:000002">
    <property type="entry name" value="Ribonuclease Z"/>
    <property type="match status" value="1"/>
</dbReference>
<dbReference type="Gene3D" id="3.60.15.10">
    <property type="entry name" value="Ribonuclease Z/Hydroxyacylglutathione hydrolase-like"/>
    <property type="match status" value="1"/>
</dbReference>
<dbReference type="HAMAP" id="MF_01818">
    <property type="entry name" value="RNase_Z_BN"/>
    <property type="match status" value="1"/>
</dbReference>
<dbReference type="InterPro" id="IPR001279">
    <property type="entry name" value="Metallo-B-lactamas"/>
</dbReference>
<dbReference type="InterPro" id="IPR036866">
    <property type="entry name" value="RibonucZ/Hydroxyglut_hydro"/>
</dbReference>
<dbReference type="InterPro" id="IPR013471">
    <property type="entry name" value="RNase_Z/BN"/>
</dbReference>
<dbReference type="NCBIfam" id="NF000801">
    <property type="entry name" value="PRK00055.1-3"/>
    <property type="match status" value="1"/>
</dbReference>
<dbReference type="NCBIfam" id="TIGR02651">
    <property type="entry name" value="RNase_Z"/>
    <property type="match status" value="1"/>
</dbReference>
<dbReference type="PANTHER" id="PTHR46018">
    <property type="entry name" value="ZINC PHOSPHODIESTERASE ELAC PROTEIN 1"/>
    <property type="match status" value="1"/>
</dbReference>
<dbReference type="PANTHER" id="PTHR46018:SF2">
    <property type="entry name" value="ZINC PHOSPHODIESTERASE ELAC PROTEIN 1"/>
    <property type="match status" value="1"/>
</dbReference>
<dbReference type="Pfam" id="PF00753">
    <property type="entry name" value="Lactamase_B"/>
    <property type="match status" value="1"/>
</dbReference>
<dbReference type="SUPFAM" id="SSF56281">
    <property type="entry name" value="Metallo-hydrolase/oxidoreductase"/>
    <property type="match status" value="1"/>
</dbReference>
<reference key="1">
    <citation type="journal article" date="2006" name="Proc. Natl. Acad. Sci. U.S.A.">
        <title>Comparative genomics of the lactic acid bacteria.</title>
        <authorList>
            <person name="Makarova K.S."/>
            <person name="Slesarev A."/>
            <person name="Wolf Y.I."/>
            <person name="Sorokin A."/>
            <person name="Mirkin B."/>
            <person name="Koonin E.V."/>
            <person name="Pavlov A."/>
            <person name="Pavlova N."/>
            <person name="Karamychev V."/>
            <person name="Polouchine N."/>
            <person name="Shakhova V."/>
            <person name="Grigoriev I."/>
            <person name="Lou Y."/>
            <person name="Rohksar D."/>
            <person name="Lucas S."/>
            <person name="Huang K."/>
            <person name="Goodstein D.M."/>
            <person name="Hawkins T."/>
            <person name="Plengvidhya V."/>
            <person name="Welker D."/>
            <person name="Hughes J."/>
            <person name="Goh Y."/>
            <person name="Benson A."/>
            <person name="Baldwin K."/>
            <person name="Lee J.-H."/>
            <person name="Diaz-Muniz I."/>
            <person name="Dosti B."/>
            <person name="Smeianov V."/>
            <person name="Wechter W."/>
            <person name="Barabote R."/>
            <person name="Lorca G."/>
            <person name="Altermann E."/>
            <person name="Barrangou R."/>
            <person name="Ganesan B."/>
            <person name="Xie Y."/>
            <person name="Rawsthorne H."/>
            <person name="Tamir D."/>
            <person name="Parker C."/>
            <person name="Breidt F."/>
            <person name="Broadbent J.R."/>
            <person name="Hutkins R."/>
            <person name="O'Sullivan D."/>
            <person name="Steele J."/>
            <person name="Unlu G."/>
            <person name="Saier M.H. Jr."/>
            <person name="Klaenhammer T."/>
            <person name="Richardson P."/>
            <person name="Kozyavkin S."/>
            <person name="Weimer B.C."/>
            <person name="Mills D.A."/>
        </authorList>
    </citation>
    <scope>NUCLEOTIDE SEQUENCE [LARGE SCALE GENOMIC DNA]</scope>
    <source>
        <strain>ATCC BAA-331 / PSU-1</strain>
    </source>
</reference>
<keyword id="KW-0255">Endonuclease</keyword>
<keyword id="KW-0378">Hydrolase</keyword>
<keyword id="KW-0479">Metal-binding</keyword>
<keyword id="KW-0540">Nuclease</keyword>
<keyword id="KW-1185">Reference proteome</keyword>
<keyword id="KW-0819">tRNA processing</keyword>
<keyword id="KW-0862">Zinc</keyword>
<organism>
    <name type="scientific">Oenococcus oeni (strain ATCC BAA-331 / PSU-1)</name>
    <dbReference type="NCBI Taxonomy" id="203123"/>
    <lineage>
        <taxon>Bacteria</taxon>
        <taxon>Bacillati</taxon>
        <taxon>Bacillota</taxon>
        <taxon>Bacilli</taxon>
        <taxon>Lactobacillales</taxon>
        <taxon>Lactobacillaceae</taxon>
        <taxon>Oenococcus</taxon>
    </lineage>
</organism>
<protein>
    <recommendedName>
        <fullName evidence="1">Ribonuclease Z</fullName>
        <shortName evidence="1">RNase Z</shortName>
        <ecNumber evidence="1">3.1.26.11</ecNumber>
    </recommendedName>
    <alternativeName>
        <fullName evidence="1">tRNA 3 endonuclease</fullName>
    </alternativeName>
    <alternativeName>
        <fullName evidence="1">tRNase Z</fullName>
    </alternativeName>
</protein>